<feature type="signal peptide" evidence="2">
    <location>
        <begin position="1"/>
        <end position="19"/>
    </location>
</feature>
<feature type="propeptide" id="PRO_0000033557" evidence="2">
    <location>
        <begin position="20"/>
        <end position="56"/>
    </location>
</feature>
<feature type="peptide" id="PRO_0000033558" description="Substance P">
    <location>
        <begin position="58"/>
        <end position="68"/>
    </location>
</feature>
<feature type="peptide" id="PRO_0000033559" description="Neuropeptide gamma">
    <location>
        <begin position="72"/>
        <end position="92"/>
    </location>
</feature>
<feature type="peptide" id="PRO_0000033560" description="Neurokinin A">
    <location>
        <begin position="83"/>
        <end position="92"/>
    </location>
</feature>
<feature type="peptide" id="PRO_0000033561" description="C-terminal-flanking peptide">
    <location>
        <begin position="96"/>
        <end position="111"/>
    </location>
</feature>
<feature type="site" description="Cleavage; by FAP" evidence="1">
    <location>
        <begin position="59"/>
        <end position="60"/>
    </location>
</feature>
<feature type="site" description="Cleavage; by MME" evidence="1">
    <location>
        <begin position="63"/>
        <end position="64"/>
    </location>
</feature>
<feature type="site" description="Cleavage; by MME" evidence="1">
    <location>
        <begin position="64"/>
        <end position="65"/>
    </location>
</feature>
<feature type="site" description="Cleavage; by ACE" evidence="1">
    <location>
        <begin position="65"/>
        <end position="66"/>
    </location>
</feature>
<feature type="site" description="Cleavage; by ACE and MME" evidence="1">
    <location>
        <begin position="66"/>
        <end position="67"/>
    </location>
</feature>
<feature type="modified residue" description="Methionine amide" evidence="1">
    <location>
        <position position="68"/>
    </location>
</feature>
<feature type="modified residue" description="Methionine amide" evidence="3">
    <location>
        <position position="92"/>
    </location>
</feature>
<feature type="helix" evidence="5">
    <location>
        <begin position="79"/>
        <end position="83"/>
    </location>
</feature>
<feature type="helix" evidence="5">
    <location>
        <begin position="84"/>
        <end position="87"/>
    </location>
</feature>
<feature type="turn" evidence="5">
    <location>
        <begin position="88"/>
        <end position="91"/>
    </location>
</feature>
<name>TKN1_RABIT</name>
<evidence type="ECO:0000250" key="1">
    <source>
        <dbReference type="UniProtKB" id="P20366"/>
    </source>
</evidence>
<evidence type="ECO:0000255" key="2"/>
<evidence type="ECO:0000269" key="3">
    <source ref="2"/>
</evidence>
<evidence type="ECO:0000305" key="4"/>
<evidence type="ECO:0007829" key="5">
    <source>
        <dbReference type="PDB" id="2MCE"/>
    </source>
</evidence>
<organism>
    <name type="scientific">Oryctolagus cuniculus</name>
    <name type="common">Rabbit</name>
    <dbReference type="NCBI Taxonomy" id="9986"/>
    <lineage>
        <taxon>Eukaryota</taxon>
        <taxon>Metazoa</taxon>
        <taxon>Chordata</taxon>
        <taxon>Craniata</taxon>
        <taxon>Vertebrata</taxon>
        <taxon>Euteleostomi</taxon>
        <taxon>Mammalia</taxon>
        <taxon>Eutheria</taxon>
        <taxon>Euarchontoglires</taxon>
        <taxon>Glires</taxon>
        <taxon>Lagomorpha</taxon>
        <taxon>Leporidae</taxon>
        <taxon>Oryctolagus</taxon>
    </lineage>
</organism>
<proteinExistence type="evidence at protein level"/>
<dbReference type="EMBL" id="X62994">
    <property type="protein sequence ID" value="CAA44728.1"/>
    <property type="molecule type" value="mRNA"/>
</dbReference>
<dbReference type="PIR" id="JN0709">
    <property type="entry name" value="SPRBG"/>
</dbReference>
<dbReference type="RefSeq" id="NP_001095168.1">
    <molecule id="P41540-1"/>
    <property type="nucleotide sequence ID" value="NM_001101698.1"/>
</dbReference>
<dbReference type="PDB" id="2MCE">
    <property type="method" value="NMR"/>
    <property type="chains" value="A=72-92"/>
</dbReference>
<dbReference type="PDBsum" id="2MCE"/>
<dbReference type="BMRB" id="P41540"/>
<dbReference type="SMR" id="P41540"/>
<dbReference type="FunCoup" id="P41540">
    <property type="interactions" value="81"/>
</dbReference>
<dbReference type="STRING" id="9986.ENSOCUP00000037983"/>
<dbReference type="GeneID" id="100009275"/>
<dbReference type="KEGG" id="ocu:100009275"/>
<dbReference type="CTD" id="6863"/>
<dbReference type="InParanoid" id="P41540"/>
<dbReference type="OrthoDB" id="9936276at2759"/>
<dbReference type="Proteomes" id="UP000001811">
    <property type="component" value="Unplaced"/>
</dbReference>
<dbReference type="GO" id="GO:0005615">
    <property type="term" value="C:extracellular space"/>
    <property type="evidence" value="ECO:0007669"/>
    <property type="project" value="TreeGrafter"/>
</dbReference>
<dbReference type="GO" id="GO:0045202">
    <property type="term" value="C:synapse"/>
    <property type="evidence" value="ECO:0007669"/>
    <property type="project" value="GOC"/>
</dbReference>
<dbReference type="GO" id="GO:0031835">
    <property type="term" value="F:substance P receptor binding"/>
    <property type="evidence" value="ECO:0007669"/>
    <property type="project" value="TreeGrafter"/>
</dbReference>
<dbReference type="GO" id="GO:0007268">
    <property type="term" value="P:chemical synaptic transmission"/>
    <property type="evidence" value="ECO:0007669"/>
    <property type="project" value="UniProtKB-KW"/>
</dbReference>
<dbReference type="GO" id="GO:0006954">
    <property type="term" value="P:inflammatory response"/>
    <property type="evidence" value="ECO:0007669"/>
    <property type="project" value="TreeGrafter"/>
</dbReference>
<dbReference type="GO" id="GO:0007218">
    <property type="term" value="P:neuropeptide signaling pathway"/>
    <property type="evidence" value="ECO:0007669"/>
    <property type="project" value="UniProtKB-KW"/>
</dbReference>
<dbReference type="GO" id="GO:0007204">
    <property type="term" value="P:positive regulation of cytosolic calcium ion concentration"/>
    <property type="evidence" value="ECO:0007669"/>
    <property type="project" value="TreeGrafter"/>
</dbReference>
<dbReference type="GO" id="GO:0007217">
    <property type="term" value="P:tachykinin receptor signaling pathway"/>
    <property type="evidence" value="ECO:0007669"/>
    <property type="project" value="InterPro"/>
</dbReference>
<dbReference type="InterPro" id="IPR013055">
    <property type="entry name" value="Tachy_Neuro_lke_CS"/>
</dbReference>
<dbReference type="InterPro" id="IPR008215">
    <property type="entry name" value="Tachykinin_dom"/>
</dbReference>
<dbReference type="InterPro" id="IPR008216">
    <property type="entry name" value="Tachykinin_fam"/>
</dbReference>
<dbReference type="PANTHER" id="PTHR11250:SF3">
    <property type="entry name" value="PROTACHYKININ-1"/>
    <property type="match status" value="1"/>
</dbReference>
<dbReference type="PANTHER" id="PTHR11250">
    <property type="entry name" value="TACHYKININ"/>
    <property type="match status" value="1"/>
</dbReference>
<dbReference type="Pfam" id="PF02202">
    <property type="entry name" value="Tachykinin"/>
    <property type="match status" value="1"/>
</dbReference>
<dbReference type="PRINTS" id="PR01829">
    <property type="entry name" value="PROTACHYKNIN"/>
</dbReference>
<dbReference type="SMART" id="SM00203">
    <property type="entry name" value="TK"/>
    <property type="match status" value="2"/>
</dbReference>
<dbReference type="PROSITE" id="PS00267">
    <property type="entry name" value="TACHYKININ"/>
    <property type="match status" value="2"/>
</dbReference>
<accession>P41540</accession>
<gene>
    <name type="primary">TAC1</name>
    <name type="synonym">NKA</name>
    <name type="synonym">NKNA</name>
    <name type="synonym">TAC2</name>
</gene>
<reference key="1">
    <citation type="journal article" date="1993" name="Biochem. Biophys. Res. Commun.">
        <title>Nucleotide sequence of the rabbit gamma-preprotachykinin I cDNA.</title>
        <authorList>
            <person name="Maegert H.-J."/>
            <person name="Heitland A."/>
            <person name="Rose M."/>
            <person name="Forssmann W.-G."/>
        </authorList>
    </citation>
    <scope>NUCLEOTIDE SEQUENCE [MRNA]</scope>
    <source>
        <tissue>Brain</tissue>
    </source>
</reference>
<reference key="2">
    <citation type="journal article" date="1987" name="Regul. Pept.">
        <title>Gamma-neuropeptide K: a peptide isolated from rabbit gut that is derived from gamma-preprotachykinin.</title>
        <authorList>
            <person name="Kage R."/>
            <person name="McGregor G.P."/>
            <person name="Thim L."/>
            <person name="Conlon J.M."/>
        </authorList>
    </citation>
    <scope>PROTEIN SEQUENCE OF 72-92</scope>
    <scope>AMIDATION AT MET-92</scope>
</reference>
<sequence length="115" mass="13370">MKILVALAVLALVSTQLFAEDIRANDDLNYWSDWSDSDQIKEELPEPFEHLLQRIARRPKPQQFFGLMGKRDAGHGQISHKRHKTDSFVGLMGKRALNSVAYERSAMQNYERRRK</sequence>
<keyword id="KW-0002">3D-structure</keyword>
<keyword id="KW-0025">Alternative splicing</keyword>
<keyword id="KW-0027">Amidation</keyword>
<keyword id="KW-0165">Cleavage on pair of basic residues</keyword>
<keyword id="KW-0903">Direct protein sequencing</keyword>
<keyword id="KW-0527">Neuropeptide</keyword>
<keyword id="KW-0529">Neurotransmitter</keyword>
<keyword id="KW-1185">Reference proteome</keyword>
<keyword id="KW-0964">Secreted</keyword>
<keyword id="KW-0732">Signal</keyword>
<comment type="function">
    <text>Tachykinins are active peptides which excite neurons, evoke behavioral responses, are potent vasodilators and secretagogues, and contract (directly or indirectly) many smooth muscles.</text>
</comment>
<comment type="subcellular location">
    <subcellularLocation>
        <location>Secreted</location>
    </subcellularLocation>
</comment>
<comment type="alternative products">
    <event type="alternative splicing"/>
    <isoform>
        <id>P41540-1</id>
        <name>Beta</name>
        <sequence type="displayed"/>
    </isoform>
    <isoform>
        <id>P41540-2</id>
        <name>Alpha</name>
        <sequence type="not described"/>
    </isoform>
    <isoform>
        <id>P41540-4</id>
        <name>Gamma</name>
        <sequence type="not described"/>
    </isoform>
    <isoform>
        <id>P41540-3</id>
        <name>Delta</name>
        <sequence type="not described"/>
    </isoform>
</comment>
<comment type="PTM">
    <molecule>Substance P</molecule>
    <text evidence="1">The substance P form is cleaved at Pro-59 by the prolyl endopeptidase FAP (seprase) activity (in vitro). Substance P is also cleaved and degraded by Angiotensin-converting enzyme (ACE) and neprilysin (MME).</text>
</comment>
<comment type="similarity">
    <text evidence="4">Belongs to the tachykinin family.</text>
</comment>
<protein>
    <recommendedName>
        <fullName>Protachykinin-1</fullName>
    </recommendedName>
    <alternativeName>
        <fullName>PPT</fullName>
    </alternativeName>
    <component>
        <recommendedName>
            <fullName>Substance P</fullName>
        </recommendedName>
    </component>
    <component>
        <recommendedName>
            <fullName>Neurokinin A</fullName>
            <shortName>NKA</shortName>
        </recommendedName>
        <alternativeName>
            <fullName>Neuromedin L</fullName>
        </alternativeName>
        <alternativeName>
            <fullName>Substance K</fullName>
        </alternativeName>
    </component>
    <component>
        <recommendedName>
            <fullName>Neuropeptide gamma</fullName>
        </recommendedName>
    </component>
    <component>
        <recommendedName>
            <fullName>C-terminal-flanking peptide</fullName>
        </recommendedName>
    </component>
</protein>